<keyword id="KW-0972">Capsule biogenesis/degradation</keyword>
<keyword id="KW-1003">Cell membrane</keyword>
<keyword id="KW-0328">Glycosyltransferase</keyword>
<keyword id="KW-0472">Membrane</keyword>
<keyword id="KW-0808">Transferase</keyword>
<keyword id="KW-0812">Transmembrane</keyword>
<keyword id="KW-1133">Transmembrane helix</keyword>
<keyword id="KW-0843">Virulence</keyword>
<name>HASA_STRPQ</name>
<dbReference type="EC" id="2.4.1.212"/>
<dbReference type="EMBL" id="BA000034">
    <property type="protein sequence ID" value="BAC64942.1"/>
    <property type="status" value="ALT_INIT"/>
    <property type="molecule type" value="Genomic_DNA"/>
</dbReference>
<dbReference type="PIR" id="A48755">
    <property type="entry name" value="A48755"/>
</dbReference>
<dbReference type="RefSeq" id="WP_011055113.1">
    <property type="nucleotide sequence ID" value="NC_004606.1"/>
</dbReference>
<dbReference type="SMR" id="P0DB61"/>
<dbReference type="CAZy" id="GT2">
    <property type="family name" value="Glycosyltransferase Family 2"/>
</dbReference>
<dbReference type="KEGG" id="sps:SPs1847"/>
<dbReference type="HOGENOM" id="CLU_029695_4_0_9"/>
<dbReference type="UniPathway" id="UPA00341"/>
<dbReference type="GO" id="GO:0005886">
    <property type="term" value="C:plasma membrane"/>
    <property type="evidence" value="ECO:0007669"/>
    <property type="project" value="UniProtKB-SubCell"/>
</dbReference>
<dbReference type="GO" id="GO:0050501">
    <property type="term" value="F:hyaluronan synthase activity"/>
    <property type="evidence" value="ECO:0007669"/>
    <property type="project" value="UniProtKB-EC"/>
</dbReference>
<dbReference type="GO" id="GO:0085029">
    <property type="term" value="P:extracellular matrix assembly"/>
    <property type="evidence" value="ECO:0007669"/>
    <property type="project" value="TreeGrafter"/>
</dbReference>
<dbReference type="GO" id="GO:0030213">
    <property type="term" value="P:hyaluronan biosynthetic process"/>
    <property type="evidence" value="ECO:0007669"/>
    <property type="project" value="UniProtKB-UniPathway"/>
</dbReference>
<dbReference type="CDD" id="cd06423">
    <property type="entry name" value="CESA_like"/>
    <property type="match status" value="1"/>
</dbReference>
<dbReference type="Gene3D" id="3.90.550.10">
    <property type="entry name" value="Spore Coat Polysaccharide Biosynthesis Protein SpsA, Chain A"/>
    <property type="match status" value="1"/>
</dbReference>
<dbReference type="InterPro" id="IPR001173">
    <property type="entry name" value="Glyco_trans_2-like"/>
</dbReference>
<dbReference type="InterPro" id="IPR029044">
    <property type="entry name" value="Nucleotide-diphossugar_trans"/>
</dbReference>
<dbReference type="PANTHER" id="PTHR22913">
    <property type="entry name" value="HYALURONAN SYNTHASE"/>
    <property type="match status" value="1"/>
</dbReference>
<dbReference type="PANTHER" id="PTHR22913:SF12">
    <property type="entry name" value="MANNURONAN SYNTHASE"/>
    <property type="match status" value="1"/>
</dbReference>
<dbReference type="Pfam" id="PF00535">
    <property type="entry name" value="Glycos_transf_2"/>
    <property type="match status" value="1"/>
</dbReference>
<dbReference type="SUPFAM" id="SSF53448">
    <property type="entry name" value="Nucleotide-diphospho-sugar transferases"/>
    <property type="match status" value="1"/>
</dbReference>
<evidence type="ECO:0000250" key="1"/>
<evidence type="ECO:0000255" key="2"/>
<evidence type="ECO:0000305" key="3"/>
<comment type="function">
    <text evidence="1">Glycosaminoglycan synthesis. The hyaluronic acid capsule is involved in the pathogenicity of group A Streptococci; it may be the major virulence determinant (By similarity).</text>
</comment>
<comment type="catalytic activity">
    <reaction>
        <text>[hyaluronan](n) + UDP-N-acetyl-alpha-D-glucosamine = N-acetyl-beta-D-glucosaminyl-(1-&gt;4)-[hyaluronan](n) + UDP + H(+)</text>
        <dbReference type="Rhea" id="RHEA:20465"/>
        <dbReference type="Rhea" id="RHEA-COMP:12583"/>
        <dbReference type="Rhea" id="RHEA-COMP:12585"/>
        <dbReference type="ChEBI" id="CHEBI:15378"/>
        <dbReference type="ChEBI" id="CHEBI:57705"/>
        <dbReference type="ChEBI" id="CHEBI:58223"/>
        <dbReference type="ChEBI" id="CHEBI:132153"/>
        <dbReference type="ChEBI" id="CHEBI:132154"/>
        <dbReference type="EC" id="2.4.1.212"/>
    </reaction>
</comment>
<comment type="catalytic activity">
    <reaction>
        <text>N-acetyl-beta-D-glucosaminyl-(1-&gt;4)-[hyaluronan](n) + UDP-alpha-D-glucuronate = [hyaluronan](n+1) + UDP + H(+)</text>
        <dbReference type="Rhea" id="RHEA:12528"/>
        <dbReference type="Rhea" id="RHEA-COMP:12585"/>
        <dbReference type="Rhea" id="RHEA-COMP:12587"/>
        <dbReference type="ChEBI" id="CHEBI:15378"/>
        <dbReference type="ChEBI" id="CHEBI:58052"/>
        <dbReference type="ChEBI" id="CHEBI:58223"/>
        <dbReference type="ChEBI" id="CHEBI:132153"/>
        <dbReference type="ChEBI" id="CHEBI:132154"/>
        <dbReference type="EC" id="2.4.1.212"/>
    </reaction>
</comment>
<comment type="cofactor">
    <cofactor evidence="1">
        <name>Mg(2+)</name>
        <dbReference type="ChEBI" id="CHEBI:18420"/>
    </cofactor>
</comment>
<comment type="pathway">
    <text>Glycan biosynthesis; hyaluronan biosynthesis.</text>
</comment>
<comment type="subcellular location">
    <subcellularLocation>
        <location evidence="1">Cell membrane</location>
        <topology evidence="1">Multi-pass membrane protein</topology>
    </subcellularLocation>
</comment>
<comment type="similarity">
    <text evidence="3">Belongs to the NodC/HAS family.</text>
</comment>
<comment type="caution">
    <text evidence="3">It is uncertain whether Met-1 or Met-25 is the initiator.</text>
</comment>
<comment type="sequence caution" evidence="3">
    <conflict type="erroneous initiation">
        <sequence resource="EMBL-CDS" id="BAC64942"/>
    </conflict>
</comment>
<reference key="1">
    <citation type="journal article" date="2003" name="Genome Res.">
        <title>Genome sequence of an M3 strain of Streptococcus pyogenes reveals a large-scale genomic rearrangement in invasive strains and new insights into phage evolution.</title>
        <authorList>
            <person name="Nakagawa I."/>
            <person name="Kurokawa K."/>
            <person name="Yamashita A."/>
            <person name="Nakata M."/>
            <person name="Tomiyasu Y."/>
            <person name="Okahashi N."/>
            <person name="Kawabata S."/>
            <person name="Yamazaki K."/>
            <person name="Shiba T."/>
            <person name="Yasunaga T."/>
            <person name="Hayashi H."/>
            <person name="Hattori M."/>
            <person name="Hamada S."/>
        </authorList>
    </citation>
    <scope>NUCLEOTIDE SEQUENCE [LARGE SCALE GENOMIC DNA]</scope>
    <source>
        <strain>SSI-1</strain>
    </source>
</reference>
<accession>P0DB61</accession>
<accession>Q877W4</accession>
<accession>Q8K5G6</accession>
<proteinExistence type="inferred from homology"/>
<feature type="chain" id="PRO_0000411368" description="Hyaluronan synthase">
    <location>
        <begin position="1"/>
        <end position="419"/>
    </location>
</feature>
<feature type="transmembrane region" description="Helical" evidence="2">
    <location>
        <begin position="8"/>
        <end position="28"/>
    </location>
</feature>
<feature type="transmembrane region" description="Helical" evidence="2">
    <location>
        <begin position="33"/>
        <end position="53"/>
    </location>
</feature>
<feature type="transmembrane region" description="Helical" evidence="2">
    <location>
        <begin position="318"/>
        <end position="338"/>
    </location>
</feature>
<feature type="transmembrane region" description="Helical" evidence="2">
    <location>
        <begin position="345"/>
        <end position="365"/>
    </location>
</feature>
<feature type="transmembrane region" description="Helical" evidence="2">
    <location>
        <begin position="376"/>
        <end position="396"/>
    </location>
</feature>
<organism>
    <name type="scientific">Streptococcus pyogenes serotype M3 (strain SSI-1)</name>
    <dbReference type="NCBI Taxonomy" id="193567"/>
    <lineage>
        <taxon>Bacteria</taxon>
        <taxon>Bacillati</taxon>
        <taxon>Bacillota</taxon>
        <taxon>Bacilli</taxon>
        <taxon>Lactobacillales</taxon>
        <taxon>Streptococcaceae</taxon>
        <taxon>Streptococcus</taxon>
    </lineage>
</organism>
<sequence length="419" mass="47842">MPIFKKTLIVLSFICLISILIYLNMYLFGTSTVGIYGVILITYLVIKLGLSFLYEPFKGNPHDYKVAAVIPSYNEDAESLLETLKSVLAQTYPLSEIYIVDDGSSNTDAIQLIEEYVNREVDICRNVIVHRSLVNKGKRHAQAWAFERSDADVFLTVDSDTYIYPNALEELLKSFNDETVYAATGHLNARNRQTNLLTRLTDIRYDNAFGVERAAQSLTGNILVCSGPLSIYRREVIIPNLERYKNQTFLGLPVSIGDDRCLTNYAIDLGRTVYQSTARCDTDVPFQLKSYLKQQNRWNKSFFRESIISVKKILSNPIVALWTIFEVVMFMMLIVAIGNLLFNQAIQLDLIKLFAFLSIIFIVALCRNVHYMVKHPASFLLSPLYGILHLFVLQPLKLYSLCTIKNTEWGTRKKVTIFK</sequence>
<gene>
    <name type="primary">hasA</name>
    <name type="ordered locus">SPs1847</name>
</gene>
<protein>
    <recommendedName>
        <fullName>Hyaluronan synthase</fullName>
        <ecNumber>2.4.1.212</ecNumber>
    </recommendedName>
    <alternativeName>
        <fullName>Hyaluronate synthase</fullName>
    </alternativeName>
    <alternativeName>
        <fullName>Hyaluronic acid synthase</fullName>
        <shortName>HA synthase</shortName>
    </alternativeName>
</protein>